<keyword id="KW-0067">ATP-binding</keyword>
<keyword id="KW-0963">Cytoplasm</keyword>
<keyword id="KW-0547">Nucleotide-binding</keyword>
<keyword id="KW-0694">RNA-binding</keyword>
<keyword id="KW-0784">Thiamine biosynthesis</keyword>
<keyword id="KW-0808">Transferase</keyword>
<keyword id="KW-0820">tRNA-binding</keyword>
<protein>
    <recommendedName>
        <fullName evidence="1">Probable tRNA sulfurtransferase</fullName>
        <ecNumber evidence="1">2.8.1.4</ecNumber>
    </recommendedName>
    <alternativeName>
        <fullName evidence="1">Sulfur carrier protein ThiS sulfurtransferase</fullName>
    </alternativeName>
    <alternativeName>
        <fullName evidence="1">Thiamine biosynthesis protein ThiI</fullName>
    </alternativeName>
    <alternativeName>
        <fullName evidence="1">tRNA 4-thiouridine synthase</fullName>
    </alternativeName>
</protein>
<comment type="function">
    <text evidence="1">Catalyzes the ATP-dependent transfer of a sulfur to tRNA to produce 4-thiouridine in position 8 of tRNAs, which functions as a near-UV photosensor. Also catalyzes the transfer of sulfur to the sulfur carrier protein ThiS, forming ThiS-thiocarboxylate. This is a step in the synthesis of thiazole, in the thiamine biosynthesis pathway. The sulfur is donated as persulfide by IscS.</text>
</comment>
<comment type="catalytic activity">
    <reaction evidence="1">
        <text>[ThiI sulfur-carrier protein]-S-sulfanyl-L-cysteine + a uridine in tRNA + 2 reduced [2Fe-2S]-[ferredoxin] + ATP + H(+) = [ThiI sulfur-carrier protein]-L-cysteine + a 4-thiouridine in tRNA + 2 oxidized [2Fe-2S]-[ferredoxin] + AMP + diphosphate</text>
        <dbReference type="Rhea" id="RHEA:24176"/>
        <dbReference type="Rhea" id="RHEA-COMP:10000"/>
        <dbReference type="Rhea" id="RHEA-COMP:10001"/>
        <dbReference type="Rhea" id="RHEA-COMP:13337"/>
        <dbReference type="Rhea" id="RHEA-COMP:13338"/>
        <dbReference type="Rhea" id="RHEA-COMP:13339"/>
        <dbReference type="Rhea" id="RHEA-COMP:13340"/>
        <dbReference type="ChEBI" id="CHEBI:15378"/>
        <dbReference type="ChEBI" id="CHEBI:29950"/>
        <dbReference type="ChEBI" id="CHEBI:30616"/>
        <dbReference type="ChEBI" id="CHEBI:33019"/>
        <dbReference type="ChEBI" id="CHEBI:33737"/>
        <dbReference type="ChEBI" id="CHEBI:33738"/>
        <dbReference type="ChEBI" id="CHEBI:61963"/>
        <dbReference type="ChEBI" id="CHEBI:65315"/>
        <dbReference type="ChEBI" id="CHEBI:136798"/>
        <dbReference type="ChEBI" id="CHEBI:456215"/>
        <dbReference type="EC" id="2.8.1.4"/>
    </reaction>
</comment>
<comment type="catalytic activity">
    <reaction evidence="1">
        <text>[ThiS sulfur-carrier protein]-C-terminal Gly-Gly-AMP + S-sulfanyl-L-cysteinyl-[cysteine desulfurase] + AH2 = [ThiS sulfur-carrier protein]-C-terminal-Gly-aminoethanethioate + L-cysteinyl-[cysteine desulfurase] + A + AMP + 2 H(+)</text>
        <dbReference type="Rhea" id="RHEA:43340"/>
        <dbReference type="Rhea" id="RHEA-COMP:12157"/>
        <dbReference type="Rhea" id="RHEA-COMP:12158"/>
        <dbReference type="Rhea" id="RHEA-COMP:12910"/>
        <dbReference type="Rhea" id="RHEA-COMP:19908"/>
        <dbReference type="ChEBI" id="CHEBI:13193"/>
        <dbReference type="ChEBI" id="CHEBI:15378"/>
        <dbReference type="ChEBI" id="CHEBI:17499"/>
        <dbReference type="ChEBI" id="CHEBI:29950"/>
        <dbReference type="ChEBI" id="CHEBI:61963"/>
        <dbReference type="ChEBI" id="CHEBI:90618"/>
        <dbReference type="ChEBI" id="CHEBI:232372"/>
        <dbReference type="ChEBI" id="CHEBI:456215"/>
    </reaction>
</comment>
<comment type="pathway">
    <text evidence="1">Cofactor biosynthesis; thiamine diphosphate biosynthesis.</text>
</comment>
<comment type="subcellular location">
    <subcellularLocation>
        <location evidence="1">Cytoplasm</location>
    </subcellularLocation>
</comment>
<comment type="similarity">
    <text evidence="1">Belongs to the ThiI family.</text>
</comment>
<accession>Q931P5</accession>
<evidence type="ECO:0000255" key="1">
    <source>
        <dbReference type="HAMAP-Rule" id="MF_00021"/>
    </source>
</evidence>
<sequence>MKYDHLLVRYGELTLKGSNRKKFVNQLRNNVNKSLKGLDGFVVKGKRDRMYIELEDHADINEITYRLSKIFGIKSISPVLKVEKTIEAMSAAAIKFAQQFEENSTFKIDVKRADKNFPMDTYELQRELGGTVLKQIENVSVNVKRPDHEIRVEVRLDAIYMYEEVVPGSGGLPVGTGGKTLLMLSGGIDSPVAGMEVMRRGVTIEAIHFHSPPFTSDQAKEKVIELTRILAERVGPIKLHIVPFTELQKQVNKVVHPRYTMTSTRRMMMRVADKLVHQIGALAIVNGENLGQVASQTLHSMYAINNVTSTPVLRPLLTYDKEEIIIKSKEIGTFETSIQPFEDCCTIFTPKNPVTEPNFEKVVQYESVFDFEEMINRAVENIETLEITSDYKTIKEQQTNQLINDFL</sequence>
<reference key="1">
    <citation type="journal article" date="2001" name="Lancet">
        <title>Whole genome sequencing of meticillin-resistant Staphylococcus aureus.</title>
        <authorList>
            <person name="Kuroda M."/>
            <person name="Ohta T."/>
            <person name="Uchiyama I."/>
            <person name="Baba T."/>
            <person name="Yuzawa H."/>
            <person name="Kobayashi I."/>
            <person name="Cui L."/>
            <person name="Oguchi A."/>
            <person name="Aoki K."/>
            <person name="Nagai Y."/>
            <person name="Lian J.-Q."/>
            <person name="Ito T."/>
            <person name="Kanamori M."/>
            <person name="Matsumaru H."/>
            <person name="Maruyama A."/>
            <person name="Murakami H."/>
            <person name="Hosoyama A."/>
            <person name="Mizutani-Ui Y."/>
            <person name="Takahashi N.K."/>
            <person name="Sawano T."/>
            <person name="Inoue R."/>
            <person name="Kaito C."/>
            <person name="Sekimizu K."/>
            <person name="Hirakawa H."/>
            <person name="Kuhara S."/>
            <person name="Goto S."/>
            <person name="Yabuzaki J."/>
            <person name="Kanehisa M."/>
            <person name="Yamashita A."/>
            <person name="Oshima K."/>
            <person name="Furuya K."/>
            <person name="Yoshino C."/>
            <person name="Shiba T."/>
            <person name="Hattori M."/>
            <person name="Ogasawara N."/>
            <person name="Hayashi H."/>
            <person name="Hiramatsu K."/>
        </authorList>
    </citation>
    <scope>NUCLEOTIDE SEQUENCE [LARGE SCALE GENOMIC DNA]</scope>
    <source>
        <strain>Mu50 / ATCC 700699</strain>
    </source>
</reference>
<organism>
    <name type="scientific">Staphylococcus aureus (strain Mu50 / ATCC 700699)</name>
    <dbReference type="NCBI Taxonomy" id="158878"/>
    <lineage>
        <taxon>Bacteria</taxon>
        <taxon>Bacillati</taxon>
        <taxon>Bacillota</taxon>
        <taxon>Bacilli</taxon>
        <taxon>Bacillales</taxon>
        <taxon>Staphylococcaceae</taxon>
        <taxon>Staphylococcus</taxon>
    </lineage>
</organism>
<feature type="chain" id="PRO_0000154864" description="Probable tRNA sulfurtransferase">
    <location>
        <begin position="1"/>
        <end position="407"/>
    </location>
</feature>
<feature type="domain" description="THUMP" evidence="1">
    <location>
        <begin position="61"/>
        <end position="165"/>
    </location>
</feature>
<feature type="binding site" evidence="1">
    <location>
        <begin position="183"/>
        <end position="184"/>
    </location>
    <ligand>
        <name>ATP</name>
        <dbReference type="ChEBI" id="CHEBI:30616"/>
    </ligand>
</feature>
<feature type="binding site" evidence="1">
    <location>
        <begin position="208"/>
        <end position="209"/>
    </location>
    <ligand>
        <name>ATP</name>
        <dbReference type="ChEBI" id="CHEBI:30616"/>
    </ligand>
</feature>
<feature type="binding site" evidence="1">
    <location>
        <position position="265"/>
    </location>
    <ligand>
        <name>ATP</name>
        <dbReference type="ChEBI" id="CHEBI:30616"/>
    </ligand>
</feature>
<feature type="binding site" evidence="1">
    <location>
        <position position="287"/>
    </location>
    <ligand>
        <name>ATP</name>
        <dbReference type="ChEBI" id="CHEBI:30616"/>
    </ligand>
</feature>
<feature type="binding site" evidence="1">
    <location>
        <position position="296"/>
    </location>
    <ligand>
        <name>ATP</name>
        <dbReference type="ChEBI" id="CHEBI:30616"/>
    </ligand>
</feature>
<gene>
    <name evidence="1" type="primary">thiI</name>
    <name type="ordered locus">SAV1715</name>
</gene>
<dbReference type="EC" id="2.8.1.4" evidence="1"/>
<dbReference type="EMBL" id="BA000017">
    <property type="protein sequence ID" value="BAB57877.1"/>
    <property type="molecule type" value="Genomic_DNA"/>
</dbReference>
<dbReference type="RefSeq" id="WP_000872662.1">
    <property type="nucleotide sequence ID" value="NC_002758.2"/>
</dbReference>
<dbReference type="SMR" id="Q931P5"/>
<dbReference type="KEGG" id="sav:SAV1715"/>
<dbReference type="HOGENOM" id="CLU_037952_4_0_9"/>
<dbReference type="PhylomeDB" id="Q931P5"/>
<dbReference type="UniPathway" id="UPA00060"/>
<dbReference type="Proteomes" id="UP000002481">
    <property type="component" value="Chromosome"/>
</dbReference>
<dbReference type="GO" id="GO:0005829">
    <property type="term" value="C:cytosol"/>
    <property type="evidence" value="ECO:0007669"/>
    <property type="project" value="TreeGrafter"/>
</dbReference>
<dbReference type="GO" id="GO:0005524">
    <property type="term" value="F:ATP binding"/>
    <property type="evidence" value="ECO:0007669"/>
    <property type="project" value="UniProtKB-UniRule"/>
</dbReference>
<dbReference type="GO" id="GO:0004810">
    <property type="term" value="F:CCA tRNA nucleotidyltransferase activity"/>
    <property type="evidence" value="ECO:0007669"/>
    <property type="project" value="InterPro"/>
</dbReference>
<dbReference type="GO" id="GO:0000049">
    <property type="term" value="F:tRNA binding"/>
    <property type="evidence" value="ECO:0007669"/>
    <property type="project" value="UniProtKB-UniRule"/>
</dbReference>
<dbReference type="GO" id="GO:0140741">
    <property type="term" value="F:tRNA-uracil-4 sulfurtransferase activity"/>
    <property type="evidence" value="ECO:0007669"/>
    <property type="project" value="UniProtKB-EC"/>
</dbReference>
<dbReference type="GO" id="GO:0009228">
    <property type="term" value="P:thiamine biosynthetic process"/>
    <property type="evidence" value="ECO:0007669"/>
    <property type="project" value="UniProtKB-KW"/>
</dbReference>
<dbReference type="GO" id="GO:0009229">
    <property type="term" value="P:thiamine diphosphate biosynthetic process"/>
    <property type="evidence" value="ECO:0007669"/>
    <property type="project" value="UniProtKB-UniRule"/>
</dbReference>
<dbReference type="GO" id="GO:0052837">
    <property type="term" value="P:thiazole biosynthetic process"/>
    <property type="evidence" value="ECO:0007669"/>
    <property type="project" value="TreeGrafter"/>
</dbReference>
<dbReference type="GO" id="GO:0002937">
    <property type="term" value="P:tRNA 4-thiouridine biosynthesis"/>
    <property type="evidence" value="ECO:0007669"/>
    <property type="project" value="TreeGrafter"/>
</dbReference>
<dbReference type="CDD" id="cd01712">
    <property type="entry name" value="PPase_ThiI"/>
    <property type="match status" value="1"/>
</dbReference>
<dbReference type="CDD" id="cd11716">
    <property type="entry name" value="THUMP_ThiI"/>
    <property type="match status" value="1"/>
</dbReference>
<dbReference type="FunFam" id="3.30.2130.30:FF:000009">
    <property type="entry name" value="Probable tRNA sulfurtransferase"/>
    <property type="match status" value="1"/>
</dbReference>
<dbReference type="FunFam" id="3.40.50.620:FF:000053">
    <property type="entry name" value="Probable tRNA sulfurtransferase"/>
    <property type="match status" value="1"/>
</dbReference>
<dbReference type="Gene3D" id="3.30.2130.30">
    <property type="match status" value="1"/>
</dbReference>
<dbReference type="Gene3D" id="3.40.50.620">
    <property type="entry name" value="HUPs"/>
    <property type="match status" value="1"/>
</dbReference>
<dbReference type="HAMAP" id="MF_00021">
    <property type="entry name" value="ThiI"/>
    <property type="match status" value="1"/>
</dbReference>
<dbReference type="InterPro" id="IPR014729">
    <property type="entry name" value="Rossmann-like_a/b/a_fold"/>
</dbReference>
<dbReference type="InterPro" id="IPR020536">
    <property type="entry name" value="ThiI_AANH"/>
</dbReference>
<dbReference type="InterPro" id="IPR054173">
    <property type="entry name" value="ThiI_fer"/>
</dbReference>
<dbReference type="InterPro" id="IPR049961">
    <property type="entry name" value="ThiI_N"/>
</dbReference>
<dbReference type="InterPro" id="IPR004114">
    <property type="entry name" value="THUMP_dom"/>
</dbReference>
<dbReference type="InterPro" id="IPR049962">
    <property type="entry name" value="THUMP_ThiI"/>
</dbReference>
<dbReference type="InterPro" id="IPR003720">
    <property type="entry name" value="tRNA_STrfase"/>
</dbReference>
<dbReference type="InterPro" id="IPR050102">
    <property type="entry name" value="tRNA_sulfurtransferase_ThiI"/>
</dbReference>
<dbReference type="NCBIfam" id="TIGR00342">
    <property type="entry name" value="tRNA uracil 4-sulfurtransferase ThiI"/>
    <property type="match status" value="1"/>
</dbReference>
<dbReference type="PANTHER" id="PTHR43209">
    <property type="entry name" value="TRNA SULFURTRANSFERASE"/>
    <property type="match status" value="1"/>
</dbReference>
<dbReference type="PANTHER" id="PTHR43209:SF1">
    <property type="entry name" value="TRNA SULFURTRANSFERASE"/>
    <property type="match status" value="1"/>
</dbReference>
<dbReference type="Pfam" id="PF02568">
    <property type="entry name" value="ThiI"/>
    <property type="match status" value="1"/>
</dbReference>
<dbReference type="Pfam" id="PF22025">
    <property type="entry name" value="ThiI_fer"/>
    <property type="match status" value="1"/>
</dbReference>
<dbReference type="Pfam" id="PF02926">
    <property type="entry name" value="THUMP"/>
    <property type="match status" value="1"/>
</dbReference>
<dbReference type="SMART" id="SM00981">
    <property type="entry name" value="THUMP"/>
    <property type="match status" value="1"/>
</dbReference>
<dbReference type="SUPFAM" id="SSF52402">
    <property type="entry name" value="Adenine nucleotide alpha hydrolases-like"/>
    <property type="match status" value="1"/>
</dbReference>
<dbReference type="SUPFAM" id="SSF143437">
    <property type="entry name" value="THUMP domain-like"/>
    <property type="match status" value="1"/>
</dbReference>
<dbReference type="PROSITE" id="PS51165">
    <property type="entry name" value="THUMP"/>
    <property type="match status" value="1"/>
</dbReference>
<name>THII_STAAM</name>
<proteinExistence type="inferred from homology"/>